<comment type="function">
    <text evidence="1">Beta-glucosidases are one of a number of cellulolytic enzymes involved in the degradation of cellulosic biomass. Catalyzes the last step releasing glucose from the inhibitory cellobiose (By similarity).</text>
</comment>
<comment type="catalytic activity">
    <reaction>
        <text>Hydrolysis of terminal, non-reducing beta-D-glucosyl residues with release of beta-D-glucose.</text>
        <dbReference type="EC" id="3.2.1.21"/>
    </reaction>
</comment>
<comment type="pathway">
    <text>Glycan metabolism; cellulose degradation.</text>
</comment>
<comment type="subcellular location">
    <subcellularLocation>
        <location evidence="1">Secreted</location>
        <location evidence="1">Cell wall</location>
    </subcellularLocation>
    <text evidence="1">Covalently-linked to the cell wall.</text>
</comment>
<comment type="similarity">
    <text evidence="5">Belongs to the glycosyl hydrolase 17 family.</text>
</comment>
<accession>A1C499</accession>
<sequence length="564" mass="58575">MRGAFLATAAAIAGTAMADIAHMRRHGHDSFHQRRAVEQPAPEADATCGCTTEVVTSWGPPTLIPIATSSPSSTVTSEVVTTLHSTSYSTVTLVVTPSGASPNRESAPATPAVTLPTPGVTSFSTTGTYTIPATTLTVTHSTTVCGATTTELPSGTHTYGGVTTVVDRHTTVVCPYATVEPSGSTVTSVIRTTTYVCPSAGTYTIAPTTTYVPTSTVIVYPTPATITPGTYTQPAQTITVTRDNYIYVCPFTGQQLPTTAPVAPATTAVPATTTAVPATTTAVPATSSVAPSSSPSKPAAPSGAVSGQMGMTYSPYTNEGGCKDKASIISEVALLKSKGFTHVRVYSTDCGSLEFIGEAARTSGLRMIIGVFIKQSGVAGAQDQVTAISKWAQWDLVSLIVVGNESIQNHFCDASTLAGFIVSAKQSFKAAGYSGQVTTTEPINVWQANGDALCGAVDIIGANIHPFFNADVSAAEAGKFVAQEFKTLKGICPGKDVINLETGWPHSGEANGKAIPSREEQAIAIKAIADEVGSMSVFFSYFDDLWKQPGAFGVERYWGCIENF</sequence>
<protein>
    <recommendedName>
        <fullName>Probable beta-glucosidase btgE</fullName>
        <ecNumber>3.2.1.21</ecNumber>
    </recommendedName>
    <alternativeName>
        <fullName>Beta-D-glucoside glucohydrolase btgE</fullName>
    </alternativeName>
    <alternativeName>
        <fullName>Cellobiase btgE</fullName>
    </alternativeName>
    <alternativeName>
        <fullName>Gentiobiase btgE</fullName>
    </alternativeName>
</protein>
<name>BTGE_ASPCL</name>
<evidence type="ECO:0000250" key="1"/>
<evidence type="ECO:0000250" key="2">
    <source>
        <dbReference type="UniProtKB" id="O22317"/>
    </source>
</evidence>
<evidence type="ECO:0000255" key="3"/>
<evidence type="ECO:0000256" key="4">
    <source>
        <dbReference type="SAM" id="MobiDB-lite"/>
    </source>
</evidence>
<evidence type="ECO:0000305" key="5"/>
<organism>
    <name type="scientific">Aspergillus clavatus (strain ATCC 1007 / CBS 513.65 / DSM 816 / NCTC 3887 / NRRL 1 / QM 1276 / 107)</name>
    <dbReference type="NCBI Taxonomy" id="344612"/>
    <lineage>
        <taxon>Eukaryota</taxon>
        <taxon>Fungi</taxon>
        <taxon>Dikarya</taxon>
        <taxon>Ascomycota</taxon>
        <taxon>Pezizomycotina</taxon>
        <taxon>Eurotiomycetes</taxon>
        <taxon>Eurotiomycetidae</taxon>
        <taxon>Eurotiales</taxon>
        <taxon>Aspergillaceae</taxon>
        <taxon>Aspergillus</taxon>
        <taxon>Aspergillus subgen. Fumigati</taxon>
    </lineage>
</organism>
<feature type="signal peptide" evidence="3">
    <location>
        <begin position="1"/>
        <end position="18"/>
    </location>
</feature>
<feature type="chain" id="PRO_0000395130" description="Probable beta-glucosidase btgE">
    <location>
        <begin position="19"/>
        <end position="564"/>
    </location>
</feature>
<feature type="region of interest" description="Disordered" evidence="4">
    <location>
        <begin position="285"/>
        <end position="304"/>
    </location>
</feature>
<feature type="active site" description="Proton donor" evidence="2">
    <location>
        <position position="405"/>
    </location>
</feature>
<feature type="active site" description="Nucleophile" evidence="2">
    <location>
        <position position="501"/>
    </location>
</feature>
<feature type="glycosylation site" description="N-linked (GlcNAc...) asparagine" evidence="3">
    <location>
        <position position="404"/>
    </location>
</feature>
<gene>
    <name type="primary">btgE</name>
    <name type="ORF">ACLA_059020</name>
</gene>
<reference key="1">
    <citation type="journal article" date="2008" name="PLoS Genet.">
        <title>Genomic islands in the pathogenic filamentous fungus Aspergillus fumigatus.</title>
        <authorList>
            <person name="Fedorova N.D."/>
            <person name="Khaldi N."/>
            <person name="Joardar V.S."/>
            <person name="Maiti R."/>
            <person name="Amedeo P."/>
            <person name="Anderson M.J."/>
            <person name="Crabtree J."/>
            <person name="Silva J.C."/>
            <person name="Badger J.H."/>
            <person name="Albarraq A."/>
            <person name="Angiuoli S."/>
            <person name="Bussey H."/>
            <person name="Bowyer P."/>
            <person name="Cotty P.J."/>
            <person name="Dyer P.S."/>
            <person name="Egan A."/>
            <person name="Galens K."/>
            <person name="Fraser-Liggett C.M."/>
            <person name="Haas B.J."/>
            <person name="Inman J.M."/>
            <person name="Kent R."/>
            <person name="Lemieux S."/>
            <person name="Malavazi I."/>
            <person name="Orvis J."/>
            <person name="Roemer T."/>
            <person name="Ronning C.M."/>
            <person name="Sundaram J.P."/>
            <person name="Sutton G."/>
            <person name="Turner G."/>
            <person name="Venter J.C."/>
            <person name="White O.R."/>
            <person name="Whitty B.R."/>
            <person name="Youngman P."/>
            <person name="Wolfe K.H."/>
            <person name="Goldman G.H."/>
            <person name="Wortman J.R."/>
            <person name="Jiang B."/>
            <person name="Denning D.W."/>
            <person name="Nierman W.C."/>
        </authorList>
    </citation>
    <scope>NUCLEOTIDE SEQUENCE [LARGE SCALE GENOMIC DNA]</scope>
    <source>
        <strain>ATCC 1007 / CBS 513.65 / DSM 816 / NCTC 3887 / NRRL 1 / QM 1276 / 107</strain>
    </source>
</reference>
<dbReference type="EC" id="3.2.1.21"/>
<dbReference type="EMBL" id="DS026990">
    <property type="protein sequence ID" value="EAW15239.1"/>
    <property type="molecule type" value="Genomic_DNA"/>
</dbReference>
<dbReference type="RefSeq" id="XP_001276665.1">
    <property type="nucleotide sequence ID" value="XM_001276664.1"/>
</dbReference>
<dbReference type="SMR" id="A1C499"/>
<dbReference type="STRING" id="344612.A1C499"/>
<dbReference type="GlyCosmos" id="A1C499">
    <property type="glycosylation" value="1 site, No reported glycans"/>
</dbReference>
<dbReference type="EnsemblFungi" id="EAW15239">
    <property type="protein sequence ID" value="EAW15239"/>
    <property type="gene ID" value="ACLA_059020"/>
</dbReference>
<dbReference type="GeneID" id="4708849"/>
<dbReference type="KEGG" id="act:ACLA_059020"/>
<dbReference type="VEuPathDB" id="FungiDB:ACLA_059020"/>
<dbReference type="eggNOG" id="ENOG502QS0R">
    <property type="taxonomic scope" value="Eukaryota"/>
</dbReference>
<dbReference type="HOGENOM" id="CLU_027285_2_1_1"/>
<dbReference type="OMA" id="VVCPYAT"/>
<dbReference type="OrthoDB" id="4082933at2759"/>
<dbReference type="UniPathway" id="UPA00696"/>
<dbReference type="Proteomes" id="UP000006701">
    <property type="component" value="Unassembled WGS sequence"/>
</dbReference>
<dbReference type="GO" id="GO:0009986">
    <property type="term" value="C:cell surface"/>
    <property type="evidence" value="ECO:0007669"/>
    <property type="project" value="TreeGrafter"/>
</dbReference>
<dbReference type="GO" id="GO:0005576">
    <property type="term" value="C:extracellular region"/>
    <property type="evidence" value="ECO:0007669"/>
    <property type="project" value="UniProtKB-KW"/>
</dbReference>
<dbReference type="GO" id="GO:0009277">
    <property type="term" value="C:fungal-type cell wall"/>
    <property type="evidence" value="ECO:0007669"/>
    <property type="project" value="TreeGrafter"/>
</dbReference>
<dbReference type="GO" id="GO:0042973">
    <property type="term" value="F:glucan endo-1,3-beta-D-glucosidase activity"/>
    <property type="evidence" value="ECO:0007669"/>
    <property type="project" value="TreeGrafter"/>
</dbReference>
<dbReference type="GO" id="GO:0071555">
    <property type="term" value="P:cell wall organization"/>
    <property type="evidence" value="ECO:0007669"/>
    <property type="project" value="TreeGrafter"/>
</dbReference>
<dbReference type="GO" id="GO:0030245">
    <property type="term" value="P:cellulose catabolic process"/>
    <property type="evidence" value="ECO:0007669"/>
    <property type="project" value="UniProtKB-UniPathway"/>
</dbReference>
<dbReference type="FunFam" id="3.20.20.80:FF:000160">
    <property type="entry name" value="Probable beta-glucosidase btgE"/>
    <property type="match status" value="1"/>
</dbReference>
<dbReference type="Gene3D" id="3.20.20.80">
    <property type="entry name" value="Glycosidases"/>
    <property type="match status" value="2"/>
</dbReference>
<dbReference type="InterPro" id="IPR050732">
    <property type="entry name" value="Beta-glucan_modifiers"/>
</dbReference>
<dbReference type="InterPro" id="IPR017853">
    <property type="entry name" value="Glycoside_hydrolase_SF"/>
</dbReference>
<dbReference type="PANTHER" id="PTHR16631:SF24">
    <property type="entry name" value="FAMILY 17 GLUCOSIDASE SCW11-RELATED"/>
    <property type="match status" value="1"/>
</dbReference>
<dbReference type="PANTHER" id="PTHR16631">
    <property type="entry name" value="GLUCAN 1,3-BETA-GLUCOSIDASE"/>
    <property type="match status" value="1"/>
</dbReference>
<dbReference type="SUPFAM" id="SSF51445">
    <property type="entry name" value="(Trans)glycosidases"/>
    <property type="match status" value="1"/>
</dbReference>
<proteinExistence type="inferred from homology"/>
<keyword id="KW-0119">Carbohydrate metabolism</keyword>
<keyword id="KW-0134">Cell wall</keyword>
<keyword id="KW-0136">Cellulose degradation</keyword>
<keyword id="KW-0325">Glycoprotein</keyword>
<keyword id="KW-0326">Glycosidase</keyword>
<keyword id="KW-0378">Hydrolase</keyword>
<keyword id="KW-0624">Polysaccharide degradation</keyword>
<keyword id="KW-1185">Reference proteome</keyword>
<keyword id="KW-0964">Secreted</keyword>
<keyword id="KW-0732">Signal</keyword>